<name>RL15_SPHAL</name>
<evidence type="ECO:0000255" key="1">
    <source>
        <dbReference type="HAMAP-Rule" id="MF_01341"/>
    </source>
</evidence>
<evidence type="ECO:0000256" key="2">
    <source>
        <dbReference type="SAM" id="MobiDB-lite"/>
    </source>
</evidence>
<evidence type="ECO:0000305" key="3"/>
<keyword id="KW-1185">Reference proteome</keyword>
<keyword id="KW-0687">Ribonucleoprotein</keyword>
<keyword id="KW-0689">Ribosomal protein</keyword>
<keyword id="KW-0694">RNA-binding</keyword>
<keyword id="KW-0699">rRNA-binding</keyword>
<organism>
    <name type="scientific">Sphingopyxis alaskensis (strain DSM 13593 / LMG 18877 / RB2256)</name>
    <name type="common">Sphingomonas alaskensis</name>
    <dbReference type="NCBI Taxonomy" id="317655"/>
    <lineage>
        <taxon>Bacteria</taxon>
        <taxon>Pseudomonadati</taxon>
        <taxon>Pseudomonadota</taxon>
        <taxon>Alphaproteobacteria</taxon>
        <taxon>Sphingomonadales</taxon>
        <taxon>Sphingomonadaceae</taxon>
        <taxon>Sphingopyxis</taxon>
    </lineage>
</organism>
<sequence>MTIKLNELRDNNGARKGRMRVGRGIGSGKGKTAGRGQKGQKARSGVAINGFEGGQMPLHMRIPKRGFNNIFGKDFAIVNLGMVQKLIDAKKLDAKATIDHAALKAAGVARGGKDGVRLLAKGELTAKVTFAVAGASKGAIEAVEKAGGKVELPEARPEGDGKKATRKAEAAAKNA</sequence>
<comment type="function">
    <text evidence="1">Binds to the 23S rRNA.</text>
</comment>
<comment type="subunit">
    <text evidence="1">Part of the 50S ribosomal subunit.</text>
</comment>
<comment type="similarity">
    <text evidence="1">Belongs to the universal ribosomal protein uL15 family.</text>
</comment>
<feature type="chain" id="PRO_0000251565" description="Large ribosomal subunit protein uL15">
    <location>
        <begin position="1"/>
        <end position="175"/>
    </location>
</feature>
<feature type="region of interest" description="Disordered" evidence="2">
    <location>
        <begin position="1"/>
        <end position="44"/>
    </location>
</feature>
<feature type="region of interest" description="Disordered" evidence="2">
    <location>
        <begin position="150"/>
        <end position="175"/>
    </location>
</feature>
<feature type="compositionally biased region" description="Basic and acidic residues" evidence="2">
    <location>
        <begin position="1"/>
        <end position="13"/>
    </location>
</feature>
<feature type="compositionally biased region" description="Gly residues" evidence="2">
    <location>
        <begin position="23"/>
        <end position="37"/>
    </location>
</feature>
<accession>Q1GPB8</accession>
<dbReference type="EMBL" id="CP000356">
    <property type="protein sequence ID" value="ABF54504.1"/>
    <property type="molecule type" value="Genomic_DNA"/>
</dbReference>
<dbReference type="RefSeq" id="WP_011543069.1">
    <property type="nucleotide sequence ID" value="NC_008048.1"/>
</dbReference>
<dbReference type="SMR" id="Q1GPB8"/>
<dbReference type="STRING" id="317655.Sala_2799"/>
<dbReference type="KEGG" id="sal:Sala_2799"/>
<dbReference type="eggNOG" id="COG0200">
    <property type="taxonomic scope" value="Bacteria"/>
</dbReference>
<dbReference type="HOGENOM" id="CLU_055188_4_0_5"/>
<dbReference type="OrthoDB" id="9810293at2"/>
<dbReference type="Proteomes" id="UP000006578">
    <property type="component" value="Chromosome"/>
</dbReference>
<dbReference type="GO" id="GO:0022625">
    <property type="term" value="C:cytosolic large ribosomal subunit"/>
    <property type="evidence" value="ECO:0007669"/>
    <property type="project" value="TreeGrafter"/>
</dbReference>
<dbReference type="GO" id="GO:0019843">
    <property type="term" value="F:rRNA binding"/>
    <property type="evidence" value="ECO:0007669"/>
    <property type="project" value="UniProtKB-UniRule"/>
</dbReference>
<dbReference type="GO" id="GO:0003735">
    <property type="term" value="F:structural constituent of ribosome"/>
    <property type="evidence" value="ECO:0007669"/>
    <property type="project" value="InterPro"/>
</dbReference>
<dbReference type="GO" id="GO:0006412">
    <property type="term" value="P:translation"/>
    <property type="evidence" value="ECO:0007669"/>
    <property type="project" value="UniProtKB-UniRule"/>
</dbReference>
<dbReference type="Gene3D" id="3.100.10.10">
    <property type="match status" value="1"/>
</dbReference>
<dbReference type="HAMAP" id="MF_01341">
    <property type="entry name" value="Ribosomal_uL15"/>
    <property type="match status" value="1"/>
</dbReference>
<dbReference type="InterPro" id="IPR030878">
    <property type="entry name" value="Ribosomal_uL15"/>
</dbReference>
<dbReference type="InterPro" id="IPR021131">
    <property type="entry name" value="Ribosomal_uL15/eL18"/>
</dbReference>
<dbReference type="InterPro" id="IPR036227">
    <property type="entry name" value="Ribosomal_uL15/eL18_sf"/>
</dbReference>
<dbReference type="InterPro" id="IPR005749">
    <property type="entry name" value="Ribosomal_uL15_bac-type"/>
</dbReference>
<dbReference type="InterPro" id="IPR001196">
    <property type="entry name" value="Ribosomal_uL15_CS"/>
</dbReference>
<dbReference type="NCBIfam" id="TIGR01071">
    <property type="entry name" value="rplO_bact"/>
    <property type="match status" value="1"/>
</dbReference>
<dbReference type="PANTHER" id="PTHR12934">
    <property type="entry name" value="50S RIBOSOMAL PROTEIN L15"/>
    <property type="match status" value="1"/>
</dbReference>
<dbReference type="PANTHER" id="PTHR12934:SF11">
    <property type="entry name" value="LARGE RIBOSOMAL SUBUNIT PROTEIN UL15M"/>
    <property type="match status" value="1"/>
</dbReference>
<dbReference type="Pfam" id="PF00828">
    <property type="entry name" value="Ribosomal_L27A"/>
    <property type="match status" value="1"/>
</dbReference>
<dbReference type="SUPFAM" id="SSF52080">
    <property type="entry name" value="Ribosomal proteins L15p and L18e"/>
    <property type="match status" value="1"/>
</dbReference>
<dbReference type="PROSITE" id="PS00475">
    <property type="entry name" value="RIBOSOMAL_L15"/>
    <property type="match status" value="1"/>
</dbReference>
<proteinExistence type="inferred from homology"/>
<reference key="1">
    <citation type="journal article" date="2009" name="Proc. Natl. Acad. Sci. U.S.A.">
        <title>The genomic basis of trophic strategy in marine bacteria.</title>
        <authorList>
            <person name="Lauro F.M."/>
            <person name="McDougald D."/>
            <person name="Thomas T."/>
            <person name="Williams T.J."/>
            <person name="Egan S."/>
            <person name="Rice S."/>
            <person name="DeMaere M.Z."/>
            <person name="Ting L."/>
            <person name="Ertan H."/>
            <person name="Johnson J."/>
            <person name="Ferriera S."/>
            <person name="Lapidus A."/>
            <person name="Anderson I."/>
            <person name="Kyrpides N."/>
            <person name="Munk A.C."/>
            <person name="Detter C."/>
            <person name="Han C.S."/>
            <person name="Brown M.V."/>
            <person name="Robb F.T."/>
            <person name="Kjelleberg S."/>
            <person name="Cavicchioli R."/>
        </authorList>
    </citation>
    <scope>NUCLEOTIDE SEQUENCE [LARGE SCALE GENOMIC DNA]</scope>
    <source>
        <strain>DSM 13593 / LMG 18877 / RB2256</strain>
    </source>
</reference>
<protein>
    <recommendedName>
        <fullName evidence="1">Large ribosomal subunit protein uL15</fullName>
    </recommendedName>
    <alternativeName>
        <fullName evidence="3">50S ribosomal protein L15</fullName>
    </alternativeName>
</protein>
<gene>
    <name evidence="1" type="primary">rplO</name>
    <name type="ordered locus">Sala_2799</name>
</gene>